<gene>
    <name evidence="1" type="primary">ruvC</name>
    <name type="ordered locus">Spea_2364</name>
</gene>
<dbReference type="EC" id="3.1.21.10" evidence="1"/>
<dbReference type="EMBL" id="CP000851">
    <property type="protein sequence ID" value="ABV87684.1"/>
    <property type="molecule type" value="Genomic_DNA"/>
</dbReference>
<dbReference type="RefSeq" id="WP_012155598.1">
    <property type="nucleotide sequence ID" value="NC_009901.1"/>
</dbReference>
<dbReference type="SMR" id="A8H547"/>
<dbReference type="STRING" id="398579.Spea_2364"/>
<dbReference type="KEGG" id="spl:Spea_2364"/>
<dbReference type="eggNOG" id="COG0817">
    <property type="taxonomic scope" value="Bacteria"/>
</dbReference>
<dbReference type="HOGENOM" id="CLU_091257_2_1_6"/>
<dbReference type="OrthoDB" id="9805499at2"/>
<dbReference type="Proteomes" id="UP000002608">
    <property type="component" value="Chromosome"/>
</dbReference>
<dbReference type="GO" id="GO:0005737">
    <property type="term" value="C:cytoplasm"/>
    <property type="evidence" value="ECO:0007669"/>
    <property type="project" value="UniProtKB-SubCell"/>
</dbReference>
<dbReference type="GO" id="GO:0048476">
    <property type="term" value="C:Holliday junction resolvase complex"/>
    <property type="evidence" value="ECO:0007669"/>
    <property type="project" value="UniProtKB-UniRule"/>
</dbReference>
<dbReference type="GO" id="GO:0008821">
    <property type="term" value="F:crossover junction DNA endonuclease activity"/>
    <property type="evidence" value="ECO:0007669"/>
    <property type="project" value="UniProtKB-UniRule"/>
</dbReference>
<dbReference type="GO" id="GO:0003677">
    <property type="term" value="F:DNA binding"/>
    <property type="evidence" value="ECO:0007669"/>
    <property type="project" value="UniProtKB-KW"/>
</dbReference>
<dbReference type="GO" id="GO:0000287">
    <property type="term" value="F:magnesium ion binding"/>
    <property type="evidence" value="ECO:0007669"/>
    <property type="project" value="UniProtKB-UniRule"/>
</dbReference>
<dbReference type="GO" id="GO:0006310">
    <property type="term" value="P:DNA recombination"/>
    <property type="evidence" value="ECO:0007669"/>
    <property type="project" value="UniProtKB-UniRule"/>
</dbReference>
<dbReference type="GO" id="GO:0006281">
    <property type="term" value="P:DNA repair"/>
    <property type="evidence" value="ECO:0007669"/>
    <property type="project" value="UniProtKB-UniRule"/>
</dbReference>
<dbReference type="CDD" id="cd16962">
    <property type="entry name" value="RuvC"/>
    <property type="match status" value="1"/>
</dbReference>
<dbReference type="FunFam" id="3.30.420.10:FF:000002">
    <property type="entry name" value="Crossover junction endodeoxyribonuclease RuvC"/>
    <property type="match status" value="1"/>
</dbReference>
<dbReference type="Gene3D" id="3.30.420.10">
    <property type="entry name" value="Ribonuclease H-like superfamily/Ribonuclease H"/>
    <property type="match status" value="1"/>
</dbReference>
<dbReference type="HAMAP" id="MF_00034">
    <property type="entry name" value="RuvC"/>
    <property type="match status" value="1"/>
</dbReference>
<dbReference type="InterPro" id="IPR012337">
    <property type="entry name" value="RNaseH-like_sf"/>
</dbReference>
<dbReference type="InterPro" id="IPR036397">
    <property type="entry name" value="RNaseH_sf"/>
</dbReference>
<dbReference type="InterPro" id="IPR020563">
    <property type="entry name" value="X-over_junc_endoDNase_Mg_BS"/>
</dbReference>
<dbReference type="InterPro" id="IPR002176">
    <property type="entry name" value="X-over_junc_endoDNase_RuvC"/>
</dbReference>
<dbReference type="NCBIfam" id="NF000711">
    <property type="entry name" value="PRK00039.2-1"/>
    <property type="match status" value="1"/>
</dbReference>
<dbReference type="NCBIfam" id="TIGR00228">
    <property type="entry name" value="ruvC"/>
    <property type="match status" value="1"/>
</dbReference>
<dbReference type="PANTHER" id="PTHR30194">
    <property type="entry name" value="CROSSOVER JUNCTION ENDODEOXYRIBONUCLEASE RUVC"/>
    <property type="match status" value="1"/>
</dbReference>
<dbReference type="PANTHER" id="PTHR30194:SF3">
    <property type="entry name" value="CROSSOVER JUNCTION ENDODEOXYRIBONUCLEASE RUVC"/>
    <property type="match status" value="1"/>
</dbReference>
<dbReference type="Pfam" id="PF02075">
    <property type="entry name" value="RuvC"/>
    <property type="match status" value="1"/>
</dbReference>
<dbReference type="PRINTS" id="PR00696">
    <property type="entry name" value="RSOLVASERUVC"/>
</dbReference>
<dbReference type="SUPFAM" id="SSF53098">
    <property type="entry name" value="Ribonuclease H-like"/>
    <property type="match status" value="1"/>
</dbReference>
<dbReference type="PROSITE" id="PS01321">
    <property type="entry name" value="RUVC"/>
    <property type="match status" value="1"/>
</dbReference>
<keyword id="KW-0963">Cytoplasm</keyword>
<keyword id="KW-0227">DNA damage</keyword>
<keyword id="KW-0233">DNA recombination</keyword>
<keyword id="KW-0234">DNA repair</keyword>
<keyword id="KW-0238">DNA-binding</keyword>
<keyword id="KW-0255">Endonuclease</keyword>
<keyword id="KW-0378">Hydrolase</keyword>
<keyword id="KW-0460">Magnesium</keyword>
<keyword id="KW-0479">Metal-binding</keyword>
<keyword id="KW-0540">Nuclease</keyword>
<keyword id="KW-1185">Reference proteome</keyword>
<feature type="chain" id="PRO_1000074501" description="Crossover junction endodeoxyribonuclease RuvC">
    <location>
        <begin position="1"/>
        <end position="173"/>
    </location>
</feature>
<feature type="active site" evidence="1">
    <location>
        <position position="8"/>
    </location>
</feature>
<feature type="active site" evidence="1">
    <location>
        <position position="67"/>
    </location>
</feature>
<feature type="active site" evidence="1">
    <location>
        <position position="139"/>
    </location>
</feature>
<feature type="binding site" evidence="1">
    <location>
        <position position="8"/>
    </location>
    <ligand>
        <name>Mg(2+)</name>
        <dbReference type="ChEBI" id="CHEBI:18420"/>
        <label>1</label>
    </ligand>
</feature>
<feature type="binding site" evidence="1">
    <location>
        <position position="67"/>
    </location>
    <ligand>
        <name>Mg(2+)</name>
        <dbReference type="ChEBI" id="CHEBI:18420"/>
        <label>2</label>
    </ligand>
</feature>
<feature type="binding site" evidence="1">
    <location>
        <position position="139"/>
    </location>
    <ligand>
        <name>Mg(2+)</name>
        <dbReference type="ChEBI" id="CHEBI:18420"/>
        <label>1</label>
    </ligand>
</feature>
<evidence type="ECO:0000255" key="1">
    <source>
        <dbReference type="HAMAP-Rule" id="MF_00034"/>
    </source>
</evidence>
<proteinExistence type="inferred from homology"/>
<organism>
    <name type="scientific">Shewanella pealeana (strain ATCC 700345 / ANG-SQ1)</name>
    <dbReference type="NCBI Taxonomy" id="398579"/>
    <lineage>
        <taxon>Bacteria</taxon>
        <taxon>Pseudomonadati</taxon>
        <taxon>Pseudomonadota</taxon>
        <taxon>Gammaproteobacteria</taxon>
        <taxon>Alteromonadales</taxon>
        <taxon>Shewanellaceae</taxon>
        <taxon>Shewanella</taxon>
    </lineage>
</organism>
<comment type="function">
    <text evidence="1">The RuvA-RuvB-RuvC complex processes Holliday junction (HJ) DNA during genetic recombination and DNA repair. Endonuclease that resolves HJ intermediates. Cleaves cruciform DNA by making single-stranded nicks across the HJ at symmetrical positions within the homologous arms, yielding a 5'-phosphate and a 3'-hydroxyl group; requires a central core of homology in the junction. The consensus cleavage sequence is 5'-(A/T)TT(C/G)-3'. Cleavage occurs on the 3'-side of the TT dinucleotide at the point of strand exchange. HJ branch migration catalyzed by RuvA-RuvB allows RuvC to scan DNA until it finds its consensus sequence, where it cleaves and resolves the cruciform DNA.</text>
</comment>
<comment type="catalytic activity">
    <reaction evidence="1">
        <text>Endonucleolytic cleavage at a junction such as a reciprocal single-stranded crossover between two homologous DNA duplexes (Holliday junction).</text>
        <dbReference type="EC" id="3.1.21.10"/>
    </reaction>
</comment>
<comment type="cofactor">
    <cofactor evidence="1">
        <name>Mg(2+)</name>
        <dbReference type="ChEBI" id="CHEBI:18420"/>
    </cofactor>
    <text evidence="1">Binds 2 Mg(2+) ion per subunit.</text>
</comment>
<comment type="subunit">
    <text evidence="1">Homodimer which binds Holliday junction (HJ) DNA. The HJ becomes 2-fold symmetrical on binding to RuvC with unstacked arms; it has a different conformation from HJ DNA in complex with RuvA. In the full resolvosome a probable DNA-RuvA(4)-RuvB(12)-RuvC(2) complex forms which resolves the HJ.</text>
</comment>
<comment type="subcellular location">
    <subcellularLocation>
        <location evidence="1">Cytoplasm</location>
    </subcellularLocation>
</comment>
<comment type="similarity">
    <text evidence="1">Belongs to the RuvC family.</text>
</comment>
<name>RUVC_SHEPA</name>
<accession>A8H547</accession>
<sequence length="173" mass="18458">MAIILGVDPGSRITGYGVIKCVGRQQVYVGSGCIRTSSDELPLRLKQIFDGLSEIIRQYQPDEFAIERVFMAKNADSALKLGQARGAAIVAATAANLPVAEYSATQIKSAVVGTGRAQKTQVQHMIQQLLKLPSAPQADAADALGVAVCHYHTSQSLVALAGRANVRTYGRYK</sequence>
<protein>
    <recommendedName>
        <fullName evidence="1">Crossover junction endodeoxyribonuclease RuvC</fullName>
        <ecNumber evidence="1">3.1.21.10</ecNumber>
    </recommendedName>
    <alternativeName>
        <fullName evidence="1">Holliday junction nuclease RuvC</fullName>
    </alternativeName>
    <alternativeName>
        <fullName evidence="1">Holliday junction resolvase RuvC</fullName>
    </alternativeName>
</protein>
<reference key="1">
    <citation type="submission" date="2007-10" db="EMBL/GenBank/DDBJ databases">
        <title>Complete sequence of Shewanella pealeana ATCC 700345.</title>
        <authorList>
            <consortium name="US DOE Joint Genome Institute"/>
            <person name="Copeland A."/>
            <person name="Lucas S."/>
            <person name="Lapidus A."/>
            <person name="Barry K."/>
            <person name="Glavina del Rio T."/>
            <person name="Dalin E."/>
            <person name="Tice H."/>
            <person name="Pitluck S."/>
            <person name="Chertkov O."/>
            <person name="Brettin T."/>
            <person name="Bruce D."/>
            <person name="Detter J.C."/>
            <person name="Han C."/>
            <person name="Schmutz J."/>
            <person name="Larimer F."/>
            <person name="Land M."/>
            <person name="Hauser L."/>
            <person name="Kyrpides N."/>
            <person name="Kim E."/>
            <person name="Zhao J.-S.Z."/>
            <person name="Manno D."/>
            <person name="Hawari J."/>
            <person name="Richardson P."/>
        </authorList>
    </citation>
    <scope>NUCLEOTIDE SEQUENCE [LARGE SCALE GENOMIC DNA]</scope>
    <source>
        <strain>ATCC 700345 / ANG-SQ1</strain>
    </source>
</reference>